<organism>
    <name type="scientific">Arabidopsis thaliana</name>
    <name type="common">Mouse-ear cress</name>
    <dbReference type="NCBI Taxonomy" id="3702"/>
    <lineage>
        <taxon>Eukaryota</taxon>
        <taxon>Viridiplantae</taxon>
        <taxon>Streptophyta</taxon>
        <taxon>Embryophyta</taxon>
        <taxon>Tracheophyta</taxon>
        <taxon>Spermatophyta</taxon>
        <taxon>Magnoliopsida</taxon>
        <taxon>eudicotyledons</taxon>
        <taxon>Gunneridae</taxon>
        <taxon>Pentapetalae</taxon>
        <taxon>rosids</taxon>
        <taxon>malvids</taxon>
        <taxon>Brassicales</taxon>
        <taxon>Brassicaceae</taxon>
        <taxon>Camelineae</taxon>
        <taxon>Arabidopsis</taxon>
    </lineage>
</organism>
<feature type="chain" id="PRO_0000367981" description="Probable protein phosphatase 2C 59">
    <location>
        <begin position="1"/>
        <end position="311"/>
    </location>
</feature>
<feature type="domain" description="PPM-type phosphatase" evidence="2">
    <location>
        <begin position="33"/>
        <end position="279"/>
    </location>
</feature>
<feature type="region of interest" description="Disordered" evidence="3">
    <location>
        <begin position="1"/>
        <end position="26"/>
    </location>
</feature>
<feature type="compositionally biased region" description="Low complexity" evidence="3">
    <location>
        <begin position="1"/>
        <end position="14"/>
    </location>
</feature>
<feature type="binding site" evidence="1">
    <location>
        <position position="69"/>
    </location>
    <ligand>
        <name>Mn(2+)</name>
        <dbReference type="ChEBI" id="CHEBI:29035"/>
        <label>1</label>
    </ligand>
</feature>
<feature type="binding site" evidence="1">
    <location>
        <position position="69"/>
    </location>
    <ligand>
        <name>Mn(2+)</name>
        <dbReference type="ChEBI" id="CHEBI:29035"/>
        <label>2</label>
    </ligand>
</feature>
<feature type="binding site" evidence="1">
    <location>
        <position position="70"/>
    </location>
    <ligand>
        <name>Mn(2+)</name>
        <dbReference type="ChEBI" id="CHEBI:29035"/>
        <label>1</label>
    </ligand>
</feature>
<feature type="binding site" evidence="1">
    <location>
        <position position="231"/>
    </location>
    <ligand>
        <name>Mn(2+)</name>
        <dbReference type="ChEBI" id="CHEBI:29035"/>
        <label>2</label>
    </ligand>
</feature>
<feature type="binding site" evidence="1">
    <location>
        <position position="270"/>
    </location>
    <ligand>
        <name>Mn(2+)</name>
        <dbReference type="ChEBI" id="CHEBI:29035"/>
        <label>2</label>
    </ligand>
</feature>
<evidence type="ECO:0000250" key="1"/>
<evidence type="ECO:0000255" key="2">
    <source>
        <dbReference type="PROSITE-ProRule" id="PRU01082"/>
    </source>
</evidence>
<evidence type="ECO:0000256" key="3">
    <source>
        <dbReference type="SAM" id="MobiDB-lite"/>
    </source>
</evidence>
<evidence type="ECO:0000269" key="4">
    <source>
    </source>
</evidence>
<evidence type="ECO:0000305" key="5"/>
<keyword id="KW-0378">Hydrolase</keyword>
<keyword id="KW-0460">Magnesium</keyword>
<keyword id="KW-0464">Manganese</keyword>
<keyword id="KW-0479">Metal-binding</keyword>
<keyword id="KW-0611">Plant defense</keyword>
<keyword id="KW-0904">Protein phosphatase</keyword>
<keyword id="KW-1185">Reference proteome</keyword>
<proteinExistence type="evidence at protein level"/>
<sequence length="311" mass="33248">MGYLNSVLSSSSQVHSDDGPVSGGGLSQNGKFSYGYASSPGKRSSMEDFYETRIDGVEGEIVGLFGVFDGHGGARAAEYVKQNLFSNLIRHPKFISDTTAAIADAYNQTDSEFLKSENSQNRDAGSTASTAILVGDRLLVANVGDSRAVICRGGNAIAVSRDHKPDQSDERQRIEDAGGFVMWAGTWRVGGVLAVSRAFGDRLLKQYVVADPEIQEEKVDSSLEFLILASDGLWDVVSNEEAVGMIKAIEDPEEGAKRLMMEAYQRGSADNITCVVVRFFSDQAGGIGSSSTNIPIDHGIVPDRISGDSST</sequence>
<reference key="1">
    <citation type="journal article" date="2008" name="Plant J.">
        <title>Arabidopsis proteins important for modulating defense responses to Pseudomonas syringae that secrete HopW1-1.</title>
        <authorList>
            <person name="Lee M.W."/>
            <person name="Jelenska J."/>
            <person name="Greenberg J.T."/>
        </authorList>
    </citation>
    <scope>NUCLEOTIDE SEQUENCE [MRNA]</scope>
    <scope>FUNCTION</scope>
    <scope>ACTIVITY REGULATION</scope>
    <scope>INTERACTION WITH PSEUDOMONAS SYRINGAE MACULICOLA HOPW1-1</scope>
    <source>
        <strain>cv. Wassilewskija</strain>
    </source>
</reference>
<reference key="2">
    <citation type="journal article" date="1999" name="Nature">
        <title>Sequence and analysis of chromosome 4 of the plant Arabidopsis thaliana.</title>
        <authorList>
            <person name="Mayer K.F.X."/>
            <person name="Schueller C."/>
            <person name="Wambutt R."/>
            <person name="Murphy G."/>
            <person name="Volckaert G."/>
            <person name="Pohl T."/>
            <person name="Duesterhoeft A."/>
            <person name="Stiekema W."/>
            <person name="Entian K.-D."/>
            <person name="Terryn N."/>
            <person name="Harris B."/>
            <person name="Ansorge W."/>
            <person name="Brandt P."/>
            <person name="Grivell L.A."/>
            <person name="Rieger M."/>
            <person name="Weichselgartner M."/>
            <person name="de Simone V."/>
            <person name="Obermaier B."/>
            <person name="Mache R."/>
            <person name="Mueller M."/>
            <person name="Kreis M."/>
            <person name="Delseny M."/>
            <person name="Puigdomenech P."/>
            <person name="Watson M."/>
            <person name="Schmidtheini T."/>
            <person name="Reichert B."/>
            <person name="Portetelle D."/>
            <person name="Perez-Alonso M."/>
            <person name="Boutry M."/>
            <person name="Bancroft I."/>
            <person name="Vos P."/>
            <person name="Hoheisel J."/>
            <person name="Zimmermann W."/>
            <person name="Wedler H."/>
            <person name="Ridley P."/>
            <person name="Langham S.-A."/>
            <person name="McCullagh B."/>
            <person name="Bilham L."/>
            <person name="Robben J."/>
            <person name="van der Schueren J."/>
            <person name="Grymonprez B."/>
            <person name="Chuang Y.-J."/>
            <person name="Vandenbussche F."/>
            <person name="Braeken M."/>
            <person name="Weltjens I."/>
            <person name="Voet M."/>
            <person name="Bastiaens I."/>
            <person name="Aert R."/>
            <person name="Defoor E."/>
            <person name="Weitzenegger T."/>
            <person name="Bothe G."/>
            <person name="Ramsperger U."/>
            <person name="Hilbert H."/>
            <person name="Braun M."/>
            <person name="Holzer E."/>
            <person name="Brandt A."/>
            <person name="Peters S."/>
            <person name="van Staveren M."/>
            <person name="Dirkse W."/>
            <person name="Mooijman P."/>
            <person name="Klein Lankhorst R."/>
            <person name="Rose M."/>
            <person name="Hauf J."/>
            <person name="Koetter P."/>
            <person name="Berneiser S."/>
            <person name="Hempel S."/>
            <person name="Feldpausch M."/>
            <person name="Lamberth S."/>
            <person name="Van den Daele H."/>
            <person name="De Keyser A."/>
            <person name="Buysshaert C."/>
            <person name="Gielen J."/>
            <person name="Villarroel R."/>
            <person name="De Clercq R."/>
            <person name="van Montagu M."/>
            <person name="Rogers J."/>
            <person name="Cronin A."/>
            <person name="Quail M.A."/>
            <person name="Bray-Allen S."/>
            <person name="Clark L."/>
            <person name="Doggett J."/>
            <person name="Hall S."/>
            <person name="Kay M."/>
            <person name="Lennard N."/>
            <person name="McLay K."/>
            <person name="Mayes R."/>
            <person name="Pettett A."/>
            <person name="Rajandream M.A."/>
            <person name="Lyne M."/>
            <person name="Benes V."/>
            <person name="Rechmann S."/>
            <person name="Borkova D."/>
            <person name="Bloecker H."/>
            <person name="Scharfe M."/>
            <person name="Grimm M."/>
            <person name="Loehnert T.-H."/>
            <person name="Dose S."/>
            <person name="de Haan M."/>
            <person name="Maarse A.C."/>
            <person name="Schaefer M."/>
            <person name="Mueller-Auer S."/>
            <person name="Gabel C."/>
            <person name="Fuchs M."/>
            <person name="Fartmann B."/>
            <person name="Granderath K."/>
            <person name="Dauner D."/>
            <person name="Herzl A."/>
            <person name="Neumann S."/>
            <person name="Argiriou A."/>
            <person name="Vitale D."/>
            <person name="Liguori R."/>
            <person name="Piravandi E."/>
            <person name="Massenet O."/>
            <person name="Quigley F."/>
            <person name="Clabauld G."/>
            <person name="Muendlein A."/>
            <person name="Felber R."/>
            <person name="Schnabl S."/>
            <person name="Hiller R."/>
            <person name="Schmidt W."/>
            <person name="Lecharny A."/>
            <person name="Aubourg S."/>
            <person name="Chefdor F."/>
            <person name="Cooke R."/>
            <person name="Berger C."/>
            <person name="Monfort A."/>
            <person name="Casacuberta E."/>
            <person name="Gibbons T."/>
            <person name="Weber N."/>
            <person name="Vandenbol M."/>
            <person name="Bargues M."/>
            <person name="Terol J."/>
            <person name="Torres A."/>
            <person name="Perez-Perez A."/>
            <person name="Purnelle B."/>
            <person name="Bent E."/>
            <person name="Johnson S."/>
            <person name="Tacon D."/>
            <person name="Jesse T."/>
            <person name="Heijnen L."/>
            <person name="Schwarz S."/>
            <person name="Scholler P."/>
            <person name="Heber S."/>
            <person name="Francs P."/>
            <person name="Bielke C."/>
            <person name="Frishman D."/>
            <person name="Haase D."/>
            <person name="Lemcke K."/>
            <person name="Mewes H.-W."/>
            <person name="Stocker S."/>
            <person name="Zaccaria P."/>
            <person name="Bevan M."/>
            <person name="Wilson R.K."/>
            <person name="de la Bastide M."/>
            <person name="Habermann K."/>
            <person name="Parnell L."/>
            <person name="Dedhia N."/>
            <person name="Gnoj L."/>
            <person name="Schutz K."/>
            <person name="Huang E."/>
            <person name="Spiegel L."/>
            <person name="Sekhon M."/>
            <person name="Murray J."/>
            <person name="Sheet P."/>
            <person name="Cordes M."/>
            <person name="Abu-Threideh J."/>
            <person name="Stoneking T."/>
            <person name="Kalicki J."/>
            <person name="Graves T."/>
            <person name="Harmon G."/>
            <person name="Edwards J."/>
            <person name="Latreille P."/>
            <person name="Courtney L."/>
            <person name="Cloud J."/>
            <person name="Abbott A."/>
            <person name="Scott K."/>
            <person name="Johnson D."/>
            <person name="Minx P."/>
            <person name="Bentley D."/>
            <person name="Fulton B."/>
            <person name="Miller N."/>
            <person name="Greco T."/>
            <person name="Kemp K."/>
            <person name="Kramer J."/>
            <person name="Fulton L."/>
            <person name="Mardis E."/>
            <person name="Dante M."/>
            <person name="Pepin K."/>
            <person name="Hillier L.W."/>
            <person name="Nelson J."/>
            <person name="Spieth J."/>
            <person name="Ryan E."/>
            <person name="Andrews S."/>
            <person name="Geisel C."/>
            <person name="Layman D."/>
            <person name="Du H."/>
            <person name="Ali J."/>
            <person name="Berghoff A."/>
            <person name="Jones K."/>
            <person name="Drone K."/>
            <person name="Cotton M."/>
            <person name="Joshu C."/>
            <person name="Antonoiu B."/>
            <person name="Zidanic M."/>
            <person name="Strong C."/>
            <person name="Sun H."/>
            <person name="Lamar B."/>
            <person name="Yordan C."/>
            <person name="Ma P."/>
            <person name="Zhong J."/>
            <person name="Preston R."/>
            <person name="Vil D."/>
            <person name="Shekher M."/>
            <person name="Matero A."/>
            <person name="Shah R."/>
            <person name="Swaby I.K."/>
            <person name="O'Shaughnessy A."/>
            <person name="Rodriguez M."/>
            <person name="Hoffman J."/>
            <person name="Till S."/>
            <person name="Granat S."/>
            <person name="Shohdy N."/>
            <person name="Hasegawa A."/>
            <person name="Hameed A."/>
            <person name="Lodhi M."/>
            <person name="Johnson A."/>
            <person name="Chen E."/>
            <person name="Marra M.A."/>
            <person name="Martienssen R."/>
            <person name="McCombie W.R."/>
        </authorList>
    </citation>
    <scope>NUCLEOTIDE SEQUENCE [LARGE SCALE GENOMIC DNA]</scope>
    <source>
        <strain>cv. Columbia</strain>
    </source>
</reference>
<reference key="3">
    <citation type="journal article" date="2017" name="Plant J.">
        <title>Araport11: a complete reannotation of the Arabidopsis thaliana reference genome.</title>
        <authorList>
            <person name="Cheng C.Y."/>
            <person name="Krishnakumar V."/>
            <person name="Chan A.P."/>
            <person name="Thibaud-Nissen F."/>
            <person name="Schobel S."/>
            <person name="Town C.D."/>
        </authorList>
    </citation>
    <scope>GENOME REANNOTATION</scope>
    <source>
        <strain>cv. Columbia</strain>
    </source>
</reference>
<reference key="4">
    <citation type="journal article" date="2003" name="Science">
        <title>Empirical analysis of transcriptional activity in the Arabidopsis genome.</title>
        <authorList>
            <person name="Yamada K."/>
            <person name="Lim J."/>
            <person name="Dale J.M."/>
            <person name="Chen H."/>
            <person name="Shinn P."/>
            <person name="Palm C.J."/>
            <person name="Southwick A.M."/>
            <person name="Wu H.C."/>
            <person name="Kim C.J."/>
            <person name="Nguyen M."/>
            <person name="Pham P.K."/>
            <person name="Cheuk R.F."/>
            <person name="Karlin-Newmann G."/>
            <person name="Liu S.X."/>
            <person name="Lam B."/>
            <person name="Sakano H."/>
            <person name="Wu T."/>
            <person name="Yu G."/>
            <person name="Miranda M."/>
            <person name="Quach H.L."/>
            <person name="Tripp M."/>
            <person name="Chang C.H."/>
            <person name="Lee J.M."/>
            <person name="Toriumi M.J."/>
            <person name="Chan M.M."/>
            <person name="Tang C.C."/>
            <person name="Onodera C.S."/>
            <person name="Deng J.M."/>
            <person name="Akiyama K."/>
            <person name="Ansari Y."/>
            <person name="Arakawa T."/>
            <person name="Banh J."/>
            <person name="Banno F."/>
            <person name="Bowser L."/>
            <person name="Brooks S.Y."/>
            <person name="Carninci P."/>
            <person name="Chao Q."/>
            <person name="Choy N."/>
            <person name="Enju A."/>
            <person name="Goldsmith A.D."/>
            <person name="Gurjal M."/>
            <person name="Hansen N.F."/>
            <person name="Hayashizaki Y."/>
            <person name="Johnson-Hopson C."/>
            <person name="Hsuan V.W."/>
            <person name="Iida K."/>
            <person name="Karnes M."/>
            <person name="Khan S."/>
            <person name="Koesema E."/>
            <person name="Ishida J."/>
            <person name="Jiang P.X."/>
            <person name="Jones T."/>
            <person name="Kawai J."/>
            <person name="Kamiya A."/>
            <person name="Meyers C."/>
            <person name="Nakajima M."/>
            <person name="Narusaka M."/>
            <person name="Seki M."/>
            <person name="Sakurai T."/>
            <person name="Satou M."/>
            <person name="Tamse R."/>
            <person name="Vaysberg M."/>
            <person name="Wallender E.K."/>
            <person name="Wong C."/>
            <person name="Yamamura Y."/>
            <person name="Yuan S."/>
            <person name="Shinozaki K."/>
            <person name="Davis R.W."/>
            <person name="Theologis A."/>
            <person name="Ecker J.R."/>
        </authorList>
    </citation>
    <scope>NUCLEOTIDE SEQUENCE [LARGE SCALE MRNA]</scope>
    <source>
        <strain>cv. Columbia</strain>
    </source>
</reference>
<reference key="5">
    <citation type="journal article" date="2008" name="BMC Genomics">
        <title>Genome-wide and expression analysis of protein phosphatase 2C in rice and Arabidopsis.</title>
        <authorList>
            <person name="Xue T."/>
            <person name="Wang D."/>
            <person name="Zhang S."/>
            <person name="Ehlting J."/>
            <person name="Ni F."/>
            <person name="Jacab S."/>
            <person name="Zheng C."/>
            <person name="Zhong Y."/>
        </authorList>
    </citation>
    <scope>GENE FAMILY</scope>
    <scope>NOMENCLATURE</scope>
</reference>
<protein>
    <recommendedName>
        <fullName>Probable protein phosphatase 2C 59</fullName>
        <shortName>AtPP2C59</shortName>
        <ecNumber>3.1.3.16</ecNumber>
    </recommendedName>
    <alternativeName>
        <fullName>HopW1-1-interacting protein 2</fullName>
    </alternativeName>
    <alternativeName>
        <fullName>Protein phosphatase 2C WIN2</fullName>
        <shortName>PP2C WIN2</shortName>
    </alternativeName>
</protein>
<accession>Q8RXV3</accession>
<accession>O81773</accession>
<name>P2C59_ARATH</name>
<gene>
    <name type="primary">WIN2</name>
    <name type="ordered locus">At4g31750</name>
    <name type="ORF">F28M20.60</name>
</gene>
<comment type="function">
    <text evidence="4">Protein phosphatase that modulates defense response to pathogenic bacteria, conferring resistance and promoting salicylic acid (SA) accumulation.</text>
</comment>
<comment type="catalytic activity">
    <reaction>
        <text>O-phospho-L-seryl-[protein] + H2O = L-seryl-[protein] + phosphate</text>
        <dbReference type="Rhea" id="RHEA:20629"/>
        <dbReference type="Rhea" id="RHEA-COMP:9863"/>
        <dbReference type="Rhea" id="RHEA-COMP:11604"/>
        <dbReference type="ChEBI" id="CHEBI:15377"/>
        <dbReference type="ChEBI" id="CHEBI:29999"/>
        <dbReference type="ChEBI" id="CHEBI:43474"/>
        <dbReference type="ChEBI" id="CHEBI:83421"/>
        <dbReference type="EC" id="3.1.3.16"/>
    </reaction>
</comment>
<comment type="catalytic activity">
    <reaction>
        <text>O-phospho-L-threonyl-[protein] + H2O = L-threonyl-[protein] + phosphate</text>
        <dbReference type="Rhea" id="RHEA:47004"/>
        <dbReference type="Rhea" id="RHEA-COMP:11060"/>
        <dbReference type="Rhea" id="RHEA-COMP:11605"/>
        <dbReference type="ChEBI" id="CHEBI:15377"/>
        <dbReference type="ChEBI" id="CHEBI:30013"/>
        <dbReference type="ChEBI" id="CHEBI:43474"/>
        <dbReference type="ChEBI" id="CHEBI:61977"/>
        <dbReference type="EC" id="3.1.3.16"/>
    </reaction>
</comment>
<comment type="cofactor">
    <cofactor evidence="1">
        <name>Mg(2+)</name>
        <dbReference type="ChEBI" id="CHEBI:18420"/>
    </cofactor>
    <cofactor evidence="1">
        <name>Mn(2+)</name>
        <dbReference type="ChEBI" id="CHEBI:29035"/>
    </cofactor>
    <text evidence="1">Binds 2 magnesium or manganese ions per subunit.</text>
</comment>
<comment type="activity regulation">
    <text evidence="4">Inhibited by sodium fluoride (NaF).</text>
</comment>
<comment type="subunit">
    <text evidence="4">Interacts with the Pseudomonas syringae pv. maculicola effector HopW1-1 (via C-terminus).</text>
</comment>
<comment type="similarity">
    <text evidence="5">Belongs to the PP2C family.</text>
</comment>
<comment type="sequence caution" evidence="5">
    <conflict type="erroneous gene model prediction">
        <sequence resource="EMBL-CDS" id="CAA19748"/>
    </conflict>
</comment>
<comment type="sequence caution" evidence="5">
    <conflict type="erroneous gene model prediction">
        <sequence resource="EMBL-CDS" id="CAB79893"/>
    </conflict>
</comment>
<dbReference type="EC" id="3.1.3.16"/>
<dbReference type="EMBL" id="EU214909">
    <property type="protein sequence ID" value="ABW84225.1"/>
    <property type="molecule type" value="mRNA"/>
</dbReference>
<dbReference type="EMBL" id="AL031004">
    <property type="protein sequence ID" value="CAA19748.1"/>
    <property type="status" value="ALT_SEQ"/>
    <property type="molecule type" value="Genomic_DNA"/>
</dbReference>
<dbReference type="EMBL" id="AL161579">
    <property type="protein sequence ID" value="CAB79893.1"/>
    <property type="status" value="ALT_SEQ"/>
    <property type="molecule type" value="Genomic_DNA"/>
</dbReference>
<dbReference type="EMBL" id="CP002687">
    <property type="protein sequence ID" value="AEE85953.1"/>
    <property type="molecule type" value="Genomic_DNA"/>
</dbReference>
<dbReference type="EMBL" id="CP002687">
    <property type="protein sequence ID" value="ANM66655.1"/>
    <property type="molecule type" value="Genomic_DNA"/>
</dbReference>
<dbReference type="EMBL" id="AY080658">
    <property type="protein sequence ID" value="AAL86334.1"/>
    <property type="molecule type" value="mRNA"/>
</dbReference>
<dbReference type="EMBL" id="AY133761">
    <property type="protein sequence ID" value="AAM91695.1"/>
    <property type="molecule type" value="mRNA"/>
</dbReference>
<dbReference type="PIR" id="T05095">
    <property type="entry name" value="T05095"/>
</dbReference>
<dbReference type="RefSeq" id="NP_001328538.1">
    <property type="nucleotide sequence ID" value="NM_001342111.1"/>
</dbReference>
<dbReference type="RefSeq" id="NP_194903.2">
    <property type="nucleotide sequence ID" value="NM_119324.4"/>
</dbReference>
<dbReference type="SMR" id="Q8RXV3"/>
<dbReference type="FunCoup" id="Q8RXV3">
    <property type="interactions" value="2563"/>
</dbReference>
<dbReference type="STRING" id="3702.Q8RXV3"/>
<dbReference type="iPTMnet" id="Q8RXV3"/>
<dbReference type="PaxDb" id="3702-AT4G31750.1"/>
<dbReference type="ProteomicsDB" id="248806"/>
<dbReference type="EnsemblPlants" id="AT4G31750.1">
    <property type="protein sequence ID" value="AT4G31750.1"/>
    <property type="gene ID" value="AT4G31750"/>
</dbReference>
<dbReference type="EnsemblPlants" id="AT4G31750.3">
    <property type="protein sequence ID" value="AT4G31750.3"/>
    <property type="gene ID" value="AT4G31750"/>
</dbReference>
<dbReference type="GeneID" id="829303"/>
<dbReference type="Gramene" id="AT4G31750.1">
    <property type="protein sequence ID" value="AT4G31750.1"/>
    <property type="gene ID" value="AT4G31750"/>
</dbReference>
<dbReference type="Gramene" id="AT4G31750.3">
    <property type="protein sequence ID" value="AT4G31750.3"/>
    <property type="gene ID" value="AT4G31750"/>
</dbReference>
<dbReference type="KEGG" id="ath:AT4G31750"/>
<dbReference type="Araport" id="AT4G31750"/>
<dbReference type="TAIR" id="AT4G31750">
    <property type="gene designation" value="WIN2"/>
</dbReference>
<dbReference type="eggNOG" id="KOG0698">
    <property type="taxonomic scope" value="Eukaryota"/>
</dbReference>
<dbReference type="HOGENOM" id="CLU_013173_0_5_1"/>
<dbReference type="InParanoid" id="Q8RXV3"/>
<dbReference type="OrthoDB" id="10264738at2759"/>
<dbReference type="PhylomeDB" id="Q8RXV3"/>
<dbReference type="PRO" id="PR:Q8RXV3"/>
<dbReference type="Proteomes" id="UP000006548">
    <property type="component" value="Chromosome 4"/>
</dbReference>
<dbReference type="ExpressionAtlas" id="Q8RXV3">
    <property type="expression patterns" value="baseline and differential"/>
</dbReference>
<dbReference type="GO" id="GO:0005886">
    <property type="term" value="C:plasma membrane"/>
    <property type="evidence" value="ECO:0007005"/>
    <property type="project" value="TAIR"/>
</dbReference>
<dbReference type="GO" id="GO:0046872">
    <property type="term" value="F:metal ion binding"/>
    <property type="evidence" value="ECO:0007669"/>
    <property type="project" value="UniProtKB-KW"/>
</dbReference>
<dbReference type="GO" id="GO:0004722">
    <property type="term" value="F:protein serine/threonine phosphatase activity"/>
    <property type="evidence" value="ECO:0000314"/>
    <property type="project" value="TAIR"/>
</dbReference>
<dbReference type="GO" id="GO:0042742">
    <property type="term" value="P:defense response to bacterium"/>
    <property type="evidence" value="ECO:0000315"/>
    <property type="project" value="TAIR"/>
</dbReference>
<dbReference type="GO" id="GO:0006470">
    <property type="term" value="P:protein dephosphorylation"/>
    <property type="evidence" value="ECO:0000314"/>
    <property type="project" value="TAIR"/>
</dbReference>
<dbReference type="CDD" id="cd00143">
    <property type="entry name" value="PP2Cc"/>
    <property type="match status" value="1"/>
</dbReference>
<dbReference type="FunFam" id="3.60.40.10:FF:000011">
    <property type="entry name" value="probable protein phosphatase 2C 59"/>
    <property type="match status" value="1"/>
</dbReference>
<dbReference type="Gene3D" id="3.60.40.10">
    <property type="entry name" value="PPM-type phosphatase domain"/>
    <property type="match status" value="1"/>
</dbReference>
<dbReference type="InterPro" id="IPR015655">
    <property type="entry name" value="PP2C"/>
</dbReference>
<dbReference type="InterPro" id="IPR000222">
    <property type="entry name" value="PP2C_BS"/>
</dbReference>
<dbReference type="InterPro" id="IPR036457">
    <property type="entry name" value="PPM-type-like_dom_sf"/>
</dbReference>
<dbReference type="InterPro" id="IPR001932">
    <property type="entry name" value="PPM-type_phosphatase-like_dom"/>
</dbReference>
<dbReference type="PANTHER" id="PTHR47992">
    <property type="entry name" value="PROTEIN PHOSPHATASE"/>
    <property type="match status" value="1"/>
</dbReference>
<dbReference type="Pfam" id="PF00481">
    <property type="entry name" value="PP2C"/>
    <property type="match status" value="1"/>
</dbReference>
<dbReference type="SMART" id="SM00331">
    <property type="entry name" value="PP2C_SIG"/>
    <property type="match status" value="1"/>
</dbReference>
<dbReference type="SMART" id="SM00332">
    <property type="entry name" value="PP2Cc"/>
    <property type="match status" value="1"/>
</dbReference>
<dbReference type="SUPFAM" id="SSF81606">
    <property type="entry name" value="PP2C-like"/>
    <property type="match status" value="1"/>
</dbReference>
<dbReference type="PROSITE" id="PS01032">
    <property type="entry name" value="PPM_1"/>
    <property type="match status" value="1"/>
</dbReference>
<dbReference type="PROSITE" id="PS51746">
    <property type="entry name" value="PPM_2"/>
    <property type="match status" value="1"/>
</dbReference>